<reference key="1">
    <citation type="journal article" date="2007" name="PLoS Genet.">
        <title>Patterns and implications of gene gain and loss in the evolution of Prochlorococcus.</title>
        <authorList>
            <person name="Kettler G.C."/>
            <person name="Martiny A.C."/>
            <person name="Huang K."/>
            <person name="Zucker J."/>
            <person name="Coleman M.L."/>
            <person name="Rodrigue S."/>
            <person name="Chen F."/>
            <person name="Lapidus A."/>
            <person name="Ferriera S."/>
            <person name="Johnson J."/>
            <person name="Steglich C."/>
            <person name="Church G.M."/>
            <person name="Richardson P."/>
            <person name="Chisholm S.W."/>
        </authorList>
    </citation>
    <scope>NUCLEOTIDE SEQUENCE [LARGE SCALE GENOMIC DNA]</scope>
    <source>
        <strain>NATL2A</strain>
    </source>
</reference>
<comment type="function">
    <text evidence="1">Cell wall formation. Adds enolpyruvyl to UDP-N-acetylglucosamine.</text>
</comment>
<comment type="catalytic activity">
    <reaction evidence="1">
        <text>phosphoenolpyruvate + UDP-N-acetyl-alpha-D-glucosamine = UDP-N-acetyl-3-O-(1-carboxyvinyl)-alpha-D-glucosamine + phosphate</text>
        <dbReference type="Rhea" id="RHEA:18681"/>
        <dbReference type="ChEBI" id="CHEBI:43474"/>
        <dbReference type="ChEBI" id="CHEBI:57705"/>
        <dbReference type="ChEBI" id="CHEBI:58702"/>
        <dbReference type="ChEBI" id="CHEBI:68483"/>
        <dbReference type="EC" id="2.5.1.7"/>
    </reaction>
</comment>
<comment type="pathway">
    <text evidence="1">Cell wall biogenesis; peptidoglycan biosynthesis.</text>
</comment>
<comment type="subcellular location">
    <subcellularLocation>
        <location evidence="1">Cytoplasm</location>
    </subcellularLocation>
</comment>
<comment type="similarity">
    <text evidence="1">Belongs to the EPSP synthase family. MurA subfamily.</text>
</comment>
<gene>
    <name evidence="1" type="primary">murA</name>
    <name type="ordered locus">PMN2A_0866</name>
</gene>
<keyword id="KW-0131">Cell cycle</keyword>
<keyword id="KW-0132">Cell division</keyword>
<keyword id="KW-0133">Cell shape</keyword>
<keyword id="KW-0961">Cell wall biogenesis/degradation</keyword>
<keyword id="KW-0963">Cytoplasm</keyword>
<keyword id="KW-0573">Peptidoglycan synthesis</keyword>
<keyword id="KW-0670">Pyruvate</keyword>
<keyword id="KW-1185">Reference proteome</keyword>
<keyword id="KW-0808">Transferase</keyword>
<name>MURA_PROMT</name>
<feature type="chain" id="PRO_0000231244" description="UDP-N-acetylglucosamine 1-carboxyvinyltransferase">
    <location>
        <begin position="1"/>
        <end position="458"/>
    </location>
</feature>
<feature type="active site" description="Proton donor" evidence="1">
    <location>
        <position position="128"/>
    </location>
</feature>
<feature type="binding site" evidence="1">
    <location>
        <begin position="34"/>
        <end position="35"/>
    </location>
    <ligand>
        <name>phosphoenolpyruvate</name>
        <dbReference type="ChEBI" id="CHEBI:58702"/>
    </ligand>
</feature>
<feature type="binding site" evidence="1">
    <location>
        <position position="104"/>
    </location>
    <ligand>
        <name>UDP-N-acetyl-alpha-D-glucosamine</name>
        <dbReference type="ChEBI" id="CHEBI:57705"/>
    </ligand>
</feature>
<feature type="binding site" evidence="1">
    <location>
        <position position="320"/>
    </location>
    <ligand>
        <name>UDP-N-acetyl-alpha-D-glucosamine</name>
        <dbReference type="ChEBI" id="CHEBI:57705"/>
    </ligand>
</feature>
<feature type="binding site" evidence="1">
    <location>
        <position position="342"/>
    </location>
    <ligand>
        <name>UDP-N-acetyl-alpha-D-glucosamine</name>
        <dbReference type="ChEBI" id="CHEBI:57705"/>
    </ligand>
</feature>
<feature type="modified residue" description="2-(S-cysteinyl)pyruvic acid O-phosphothioketal" evidence="1">
    <location>
        <position position="128"/>
    </location>
</feature>
<dbReference type="EC" id="2.5.1.7" evidence="1"/>
<dbReference type="EMBL" id="CP000095">
    <property type="protein sequence ID" value="AAZ58357.1"/>
    <property type="molecule type" value="Genomic_DNA"/>
</dbReference>
<dbReference type="RefSeq" id="WP_011294954.1">
    <property type="nucleotide sequence ID" value="NC_007335.2"/>
</dbReference>
<dbReference type="SMR" id="Q46JH1"/>
<dbReference type="STRING" id="59920.PMN2A_0866"/>
<dbReference type="KEGG" id="pmn:PMN2A_0866"/>
<dbReference type="HOGENOM" id="CLU_027387_0_0_3"/>
<dbReference type="OrthoDB" id="9803760at2"/>
<dbReference type="PhylomeDB" id="Q46JH1"/>
<dbReference type="UniPathway" id="UPA00219"/>
<dbReference type="Proteomes" id="UP000002535">
    <property type="component" value="Chromosome"/>
</dbReference>
<dbReference type="GO" id="GO:0005737">
    <property type="term" value="C:cytoplasm"/>
    <property type="evidence" value="ECO:0007669"/>
    <property type="project" value="UniProtKB-SubCell"/>
</dbReference>
<dbReference type="GO" id="GO:0008760">
    <property type="term" value="F:UDP-N-acetylglucosamine 1-carboxyvinyltransferase activity"/>
    <property type="evidence" value="ECO:0007669"/>
    <property type="project" value="UniProtKB-UniRule"/>
</dbReference>
<dbReference type="GO" id="GO:0051301">
    <property type="term" value="P:cell division"/>
    <property type="evidence" value="ECO:0007669"/>
    <property type="project" value="UniProtKB-KW"/>
</dbReference>
<dbReference type="GO" id="GO:0071555">
    <property type="term" value="P:cell wall organization"/>
    <property type="evidence" value="ECO:0007669"/>
    <property type="project" value="UniProtKB-KW"/>
</dbReference>
<dbReference type="GO" id="GO:0009252">
    <property type="term" value="P:peptidoglycan biosynthetic process"/>
    <property type="evidence" value="ECO:0007669"/>
    <property type="project" value="UniProtKB-UniRule"/>
</dbReference>
<dbReference type="GO" id="GO:0008360">
    <property type="term" value="P:regulation of cell shape"/>
    <property type="evidence" value="ECO:0007669"/>
    <property type="project" value="UniProtKB-KW"/>
</dbReference>
<dbReference type="GO" id="GO:0019277">
    <property type="term" value="P:UDP-N-acetylgalactosamine biosynthetic process"/>
    <property type="evidence" value="ECO:0007669"/>
    <property type="project" value="InterPro"/>
</dbReference>
<dbReference type="CDD" id="cd01555">
    <property type="entry name" value="UdpNAET"/>
    <property type="match status" value="1"/>
</dbReference>
<dbReference type="FunFam" id="3.65.10.10:FF:000001">
    <property type="entry name" value="UDP-N-acetylglucosamine 1-carboxyvinyltransferase"/>
    <property type="match status" value="1"/>
</dbReference>
<dbReference type="Gene3D" id="3.65.10.10">
    <property type="entry name" value="Enolpyruvate transferase domain"/>
    <property type="match status" value="2"/>
</dbReference>
<dbReference type="HAMAP" id="MF_00111">
    <property type="entry name" value="MurA"/>
    <property type="match status" value="1"/>
</dbReference>
<dbReference type="InterPro" id="IPR001986">
    <property type="entry name" value="Enolpyruvate_Tfrase_dom"/>
</dbReference>
<dbReference type="InterPro" id="IPR036968">
    <property type="entry name" value="Enolpyruvate_Tfrase_sf"/>
</dbReference>
<dbReference type="InterPro" id="IPR050068">
    <property type="entry name" value="MurA_subfamily"/>
</dbReference>
<dbReference type="InterPro" id="IPR013792">
    <property type="entry name" value="RNA3'P_cycl/enolpyr_Trfase_a/b"/>
</dbReference>
<dbReference type="InterPro" id="IPR005750">
    <property type="entry name" value="UDP_GlcNAc_COvinyl_MurA"/>
</dbReference>
<dbReference type="NCBIfam" id="TIGR01072">
    <property type="entry name" value="murA"/>
    <property type="match status" value="1"/>
</dbReference>
<dbReference type="NCBIfam" id="NF006873">
    <property type="entry name" value="PRK09369.1"/>
    <property type="match status" value="1"/>
</dbReference>
<dbReference type="PANTHER" id="PTHR43783">
    <property type="entry name" value="UDP-N-ACETYLGLUCOSAMINE 1-CARBOXYVINYLTRANSFERASE"/>
    <property type="match status" value="1"/>
</dbReference>
<dbReference type="PANTHER" id="PTHR43783:SF1">
    <property type="entry name" value="UDP-N-ACETYLGLUCOSAMINE 1-CARBOXYVINYLTRANSFERASE"/>
    <property type="match status" value="1"/>
</dbReference>
<dbReference type="Pfam" id="PF00275">
    <property type="entry name" value="EPSP_synthase"/>
    <property type="match status" value="1"/>
</dbReference>
<dbReference type="SUPFAM" id="SSF55205">
    <property type="entry name" value="EPT/RTPC-like"/>
    <property type="match status" value="1"/>
</dbReference>
<protein>
    <recommendedName>
        <fullName evidence="1">UDP-N-acetylglucosamine 1-carboxyvinyltransferase</fullName>
        <ecNumber evidence="1">2.5.1.7</ecNumber>
    </recommendedName>
    <alternativeName>
        <fullName evidence="1">Enoylpyruvate transferase</fullName>
    </alternativeName>
    <alternativeName>
        <fullName evidence="1">UDP-N-acetylglucosamine enolpyruvyl transferase</fullName>
        <shortName evidence="1">EPT</shortName>
    </alternativeName>
</protein>
<organism>
    <name type="scientific">Prochlorococcus marinus (strain NATL2A)</name>
    <dbReference type="NCBI Taxonomy" id="59920"/>
    <lineage>
        <taxon>Bacteria</taxon>
        <taxon>Bacillati</taxon>
        <taxon>Cyanobacteriota</taxon>
        <taxon>Cyanophyceae</taxon>
        <taxon>Synechococcales</taxon>
        <taxon>Prochlorococcaceae</taxon>
        <taxon>Prochlorococcus</taxon>
    </lineage>
</organism>
<proteinExistence type="inferred from homology"/>
<evidence type="ECO:0000255" key="1">
    <source>
        <dbReference type="HAMAP-Rule" id="MF_00111"/>
    </source>
</evidence>
<accession>Q46JH1</accession>
<sequence>MSSVATIKRNIVPPHLEVKGGRPLSGILKVSGAKNSSLALMAAALLTKEKLLIQNVPQLTDIEVMSEILRNLGAKLTKTNNSIEINSESIHNVELPYELVHSLRASFFCVGPLLTRLGEAKIPLPGGCNIGARPVDEHINGLKALGAEVEVINDVVKAKVSTKDKRLLGANITLKYPSVGATETILMASCLASGKTTISNPAREPEIQDLAKMLNSMGAKVFGAGTKRITILGVESLNGTSHCVIPDRIEAGTFLIAAAITRSPLIIGPVIPNHLSAVISKLKECGCSISQHGNHHLKIIPREISGVDITTSPFPGFPTDLQAPFMSLMATAKGSSKIKERVFEKRMQHVLELNKMGACIYLENNTAYIKGVKELVGSNVEGGDLRSSAAIILACLSAKGNSIFTGLEHLDRGYEKLEEKLTNAGSNISRKFDQITSHSSFSNKIISEDNIDTQKNAA</sequence>